<dbReference type="EC" id="3.1.-.-" evidence="1"/>
<dbReference type="EMBL" id="CP001230">
    <property type="protein sequence ID" value="ACO04127.1"/>
    <property type="molecule type" value="Genomic_DNA"/>
</dbReference>
<dbReference type="RefSeq" id="WP_012676365.1">
    <property type="nucleotide sequence ID" value="NC_012440.1"/>
</dbReference>
<dbReference type="SMR" id="C0QSS1"/>
<dbReference type="STRING" id="123214.PERMA_1963"/>
<dbReference type="PaxDb" id="123214-PERMA_1963"/>
<dbReference type="KEGG" id="pmx:PERMA_1963"/>
<dbReference type="eggNOG" id="COG0319">
    <property type="taxonomic scope" value="Bacteria"/>
</dbReference>
<dbReference type="HOGENOM" id="CLU_106710_3_3_0"/>
<dbReference type="OrthoDB" id="9807740at2"/>
<dbReference type="Proteomes" id="UP000001366">
    <property type="component" value="Chromosome"/>
</dbReference>
<dbReference type="GO" id="GO:0005737">
    <property type="term" value="C:cytoplasm"/>
    <property type="evidence" value="ECO:0007669"/>
    <property type="project" value="UniProtKB-SubCell"/>
</dbReference>
<dbReference type="GO" id="GO:0004222">
    <property type="term" value="F:metalloendopeptidase activity"/>
    <property type="evidence" value="ECO:0007669"/>
    <property type="project" value="InterPro"/>
</dbReference>
<dbReference type="GO" id="GO:0004521">
    <property type="term" value="F:RNA endonuclease activity"/>
    <property type="evidence" value="ECO:0007669"/>
    <property type="project" value="UniProtKB-UniRule"/>
</dbReference>
<dbReference type="GO" id="GO:0008270">
    <property type="term" value="F:zinc ion binding"/>
    <property type="evidence" value="ECO:0007669"/>
    <property type="project" value="UniProtKB-UniRule"/>
</dbReference>
<dbReference type="GO" id="GO:0006364">
    <property type="term" value="P:rRNA processing"/>
    <property type="evidence" value="ECO:0007669"/>
    <property type="project" value="UniProtKB-UniRule"/>
</dbReference>
<dbReference type="Gene3D" id="3.40.390.30">
    <property type="entry name" value="Metalloproteases ('zincins'), catalytic domain"/>
    <property type="match status" value="1"/>
</dbReference>
<dbReference type="HAMAP" id="MF_00009">
    <property type="entry name" value="Endoribonucl_YbeY"/>
    <property type="match status" value="1"/>
</dbReference>
<dbReference type="InterPro" id="IPR023091">
    <property type="entry name" value="MetalPrtase_cat_dom_sf_prd"/>
</dbReference>
<dbReference type="InterPro" id="IPR002036">
    <property type="entry name" value="YbeY"/>
</dbReference>
<dbReference type="InterPro" id="IPR020549">
    <property type="entry name" value="YbeY_CS"/>
</dbReference>
<dbReference type="NCBIfam" id="TIGR00043">
    <property type="entry name" value="rRNA maturation RNase YbeY"/>
    <property type="match status" value="1"/>
</dbReference>
<dbReference type="PANTHER" id="PTHR46986">
    <property type="entry name" value="ENDORIBONUCLEASE YBEY, CHLOROPLASTIC"/>
    <property type="match status" value="1"/>
</dbReference>
<dbReference type="PANTHER" id="PTHR46986:SF1">
    <property type="entry name" value="ENDORIBONUCLEASE YBEY, CHLOROPLASTIC"/>
    <property type="match status" value="1"/>
</dbReference>
<dbReference type="Pfam" id="PF02130">
    <property type="entry name" value="YbeY"/>
    <property type="match status" value="1"/>
</dbReference>
<dbReference type="SUPFAM" id="SSF55486">
    <property type="entry name" value="Metalloproteases ('zincins'), catalytic domain"/>
    <property type="match status" value="1"/>
</dbReference>
<dbReference type="PROSITE" id="PS01306">
    <property type="entry name" value="UPF0054"/>
    <property type="match status" value="1"/>
</dbReference>
<protein>
    <recommendedName>
        <fullName evidence="1">Endoribonuclease YbeY</fullName>
        <ecNumber evidence="1">3.1.-.-</ecNumber>
    </recommendedName>
</protein>
<gene>
    <name evidence="1" type="primary">ybeY</name>
    <name type="ordered locus">PERMA_1963</name>
</gene>
<name>YBEY_PERMH</name>
<accession>C0QSS1</accession>
<feature type="chain" id="PRO_1000199986" description="Endoribonuclease YbeY">
    <location>
        <begin position="1"/>
        <end position="153"/>
    </location>
</feature>
<feature type="binding site" evidence="1">
    <location>
        <position position="112"/>
    </location>
    <ligand>
        <name>Zn(2+)</name>
        <dbReference type="ChEBI" id="CHEBI:29105"/>
        <note>catalytic</note>
    </ligand>
</feature>
<feature type="binding site" evidence="1">
    <location>
        <position position="116"/>
    </location>
    <ligand>
        <name>Zn(2+)</name>
        <dbReference type="ChEBI" id="CHEBI:29105"/>
        <note>catalytic</note>
    </ligand>
</feature>
<feature type="binding site" evidence="1">
    <location>
        <position position="122"/>
    </location>
    <ligand>
        <name>Zn(2+)</name>
        <dbReference type="ChEBI" id="CHEBI:29105"/>
        <note>catalytic</note>
    </ligand>
</feature>
<sequence>MNRILINKELGDRSITKKFVKEAVEKILEHLNIDNVEISITLTDDSTIKEINRQWRGKDKPTDVLSFPIDEKPPKYRYRILGDVVISLPYAKKQAEEIGLPYREEIIRLLIHGILHLLGYDHERSEKEAQVMFSLQDEIFENIRSYFSRTTQT</sequence>
<keyword id="KW-0963">Cytoplasm</keyword>
<keyword id="KW-0255">Endonuclease</keyword>
<keyword id="KW-0378">Hydrolase</keyword>
<keyword id="KW-0479">Metal-binding</keyword>
<keyword id="KW-0540">Nuclease</keyword>
<keyword id="KW-1185">Reference proteome</keyword>
<keyword id="KW-0690">Ribosome biogenesis</keyword>
<keyword id="KW-0698">rRNA processing</keyword>
<keyword id="KW-0862">Zinc</keyword>
<organism>
    <name type="scientific">Persephonella marina (strain DSM 14350 / EX-H1)</name>
    <dbReference type="NCBI Taxonomy" id="123214"/>
    <lineage>
        <taxon>Bacteria</taxon>
        <taxon>Pseudomonadati</taxon>
        <taxon>Aquificota</taxon>
        <taxon>Aquificia</taxon>
        <taxon>Aquificales</taxon>
        <taxon>Hydrogenothermaceae</taxon>
        <taxon>Persephonella</taxon>
    </lineage>
</organism>
<proteinExistence type="inferred from homology"/>
<evidence type="ECO:0000255" key="1">
    <source>
        <dbReference type="HAMAP-Rule" id="MF_00009"/>
    </source>
</evidence>
<comment type="function">
    <text evidence="1">Single strand-specific metallo-endoribonuclease involved in late-stage 70S ribosome quality control and in maturation of the 3' terminus of the 16S rRNA.</text>
</comment>
<comment type="cofactor">
    <cofactor evidence="1">
        <name>Zn(2+)</name>
        <dbReference type="ChEBI" id="CHEBI:29105"/>
    </cofactor>
    <text evidence="1">Binds 1 zinc ion.</text>
</comment>
<comment type="subcellular location">
    <subcellularLocation>
        <location evidence="1">Cytoplasm</location>
    </subcellularLocation>
</comment>
<comment type="similarity">
    <text evidence="1">Belongs to the endoribonuclease YbeY family.</text>
</comment>
<reference key="1">
    <citation type="journal article" date="2009" name="J. Bacteriol.">
        <title>Complete and draft genome sequences of six members of the Aquificales.</title>
        <authorList>
            <person name="Reysenbach A.-L."/>
            <person name="Hamamura N."/>
            <person name="Podar M."/>
            <person name="Griffiths E."/>
            <person name="Ferreira S."/>
            <person name="Hochstein R."/>
            <person name="Heidelberg J."/>
            <person name="Johnson J."/>
            <person name="Mead D."/>
            <person name="Pohorille A."/>
            <person name="Sarmiento M."/>
            <person name="Schweighofer K."/>
            <person name="Seshadri R."/>
            <person name="Voytek M.A."/>
        </authorList>
    </citation>
    <scope>NUCLEOTIDE SEQUENCE [LARGE SCALE GENOMIC DNA]</scope>
    <source>
        <strain>DSM 14350 / EX-H1</strain>
    </source>
</reference>